<accession>P55340</accession>
<proteinExistence type="predicted"/>
<comment type="function">
    <text evidence="2">Presumed to form part of an ABC-transporter, it may form a transport channel.</text>
</comment>
<comment type="subcellular location">
    <subcellularLocation>
        <location evidence="3">Cell membrane</location>
        <topology evidence="3">Multi-pass membrane protein</topology>
    </subcellularLocation>
</comment>
<comment type="disruption phenotype">
    <text evidence="2">Cells form colonies in which certain architectural features are absent or less prominent than those observed in wild-type colonies. The Ecs activity could be important for the development of communities.</text>
</comment>
<name>ECSB_BACSU</name>
<organism>
    <name type="scientific">Bacillus subtilis (strain 168)</name>
    <dbReference type="NCBI Taxonomy" id="224308"/>
    <lineage>
        <taxon>Bacteria</taxon>
        <taxon>Bacillati</taxon>
        <taxon>Bacillota</taxon>
        <taxon>Bacilli</taxon>
        <taxon>Bacillales</taxon>
        <taxon>Bacillaceae</taxon>
        <taxon>Bacillus</taxon>
    </lineage>
</organism>
<sequence>MNNMLDIWQSRLQEHIKETRTYMKYMLNDHLVIVLIFFLAGAASWYSKWIRDIPAHFPSFWVMAVLFSLVLTSSYVRTLLKEADLVFLLPLEAKMEPYLKQAFVYSYVSQLFPLIALSIVAMPLYFAVTPGASLVSYAAVFVQLLLLKAWNQVMEWRTTFQNDRSMKRMDVIIRFAANTLVLYFVFQSVYMYALLVYVIMAVLYLYMSSAAKRKTFKWESHIESELRRKQRFYRIANLFTDVPHLRKQAKRRAYLDFLLRLVPFEQRKTFAYMFTRAFLRSSDYLGILVRLTIVFALIIMYVSASPLIAAVLTVFAIFITGIQLLPLFGHFDHLALQELYPVQKETKLKSYFSLLKTALSIQALLMSVASAYAAGLTGFLYALIGSAVLIFVVLPAYMTTRLKKHGKL</sequence>
<reference key="1">
    <citation type="journal article" date="1996" name="Microbiology">
        <title>Molecular analysis of an operon in Bacillus subtilis encoding a novel ABC transporter with a role in exoprotein production, sporulation and competence.</title>
        <authorList>
            <person name="Leskela S."/>
            <person name="Kontinen V.P."/>
            <person name="Sarvas M."/>
        </authorList>
    </citation>
    <scope>NUCLEOTIDE SEQUENCE [GENOMIC DNA]</scope>
    <source>
        <strain>168</strain>
    </source>
</reference>
<reference key="2">
    <citation type="journal article" date="1998" name="Microbiology">
        <title>The 172 kb prkA-addAB region from 83 degrees to 97 degrees of the Bacillus subtilis chromosome contains several dysfunctional genes, the glyB marker, many genes encoding transporter proteins, and the ubiquitous hit gene.</title>
        <authorList>
            <person name="Noback M.A."/>
            <person name="Holsappel S."/>
            <person name="Kiewiet R."/>
            <person name="Terpstra P."/>
            <person name="Wambutt R."/>
            <person name="Wedler H."/>
            <person name="Venema G."/>
            <person name="Bron S."/>
        </authorList>
    </citation>
    <scope>NUCLEOTIDE SEQUENCE [GENOMIC DNA]</scope>
    <source>
        <strain>168</strain>
    </source>
</reference>
<reference key="3">
    <citation type="journal article" date="1997" name="Nature">
        <title>The complete genome sequence of the Gram-positive bacterium Bacillus subtilis.</title>
        <authorList>
            <person name="Kunst F."/>
            <person name="Ogasawara N."/>
            <person name="Moszer I."/>
            <person name="Albertini A.M."/>
            <person name="Alloni G."/>
            <person name="Azevedo V."/>
            <person name="Bertero M.G."/>
            <person name="Bessieres P."/>
            <person name="Bolotin A."/>
            <person name="Borchert S."/>
            <person name="Borriss R."/>
            <person name="Boursier L."/>
            <person name="Brans A."/>
            <person name="Braun M."/>
            <person name="Brignell S.C."/>
            <person name="Bron S."/>
            <person name="Brouillet S."/>
            <person name="Bruschi C.V."/>
            <person name="Caldwell B."/>
            <person name="Capuano V."/>
            <person name="Carter N.M."/>
            <person name="Choi S.-K."/>
            <person name="Codani J.-J."/>
            <person name="Connerton I.F."/>
            <person name="Cummings N.J."/>
            <person name="Daniel R.A."/>
            <person name="Denizot F."/>
            <person name="Devine K.M."/>
            <person name="Duesterhoeft A."/>
            <person name="Ehrlich S.D."/>
            <person name="Emmerson P.T."/>
            <person name="Entian K.-D."/>
            <person name="Errington J."/>
            <person name="Fabret C."/>
            <person name="Ferrari E."/>
            <person name="Foulger D."/>
            <person name="Fritz C."/>
            <person name="Fujita M."/>
            <person name="Fujita Y."/>
            <person name="Fuma S."/>
            <person name="Galizzi A."/>
            <person name="Galleron N."/>
            <person name="Ghim S.-Y."/>
            <person name="Glaser P."/>
            <person name="Goffeau A."/>
            <person name="Golightly E.J."/>
            <person name="Grandi G."/>
            <person name="Guiseppi G."/>
            <person name="Guy B.J."/>
            <person name="Haga K."/>
            <person name="Haiech J."/>
            <person name="Harwood C.R."/>
            <person name="Henaut A."/>
            <person name="Hilbert H."/>
            <person name="Holsappel S."/>
            <person name="Hosono S."/>
            <person name="Hullo M.-F."/>
            <person name="Itaya M."/>
            <person name="Jones L.-M."/>
            <person name="Joris B."/>
            <person name="Karamata D."/>
            <person name="Kasahara Y."/>
            <person name="Klaerr-Blanchard M."/>
            <person name="Klein C."/>
            <person name="Kobayashi Y."/>
            <person name="Koetter P."/>
            <person name="Koningstein G."/>
            <person name="Krogh S."/>
            <person name="Kumano M."/>
            <person name="Kurita K."/>
            <person name="Lapidus A."/>
            <person name="Lardinois S."/>
            <person name="Lauber J."/>
            <person name="Lazarevic V."/>
            <person name="Lee S.-M."/>
            <person name="Levine A."/>
            <person name="Liu H."/>
            <person name="Masuda S."/>
            <person name="Mauel C."/>
            <person name="Medigue C."/>
            <person name="Medina N."/>
            <person name="Mellado R.P."/>
            <person name="Mizuno M."/>
            <person name="Moestl D."/>
            <person name="Nakai S."/>
            <person name="Noback M."/>
            <person name="Noone D."/>
            <person name="O'Reilly M."/>
            <person name="Ogawa K."/>
            <person name="Ogiwara A."/>
            <person name="Oudega B."/>
            <person name="Park S.-H."/>
            <person name="Parro V."/>
            <person name="Pohl T.M."/>
            <person name="Portetelle D."/>
            <person name="Porwollik S."/>
            <person name="Prescott A.M."/>
            <person name="Presecan E."/>
            <person name="Pujic P."/>
            <person name="Purnelle B."/>
            <person name="Rapoport G."/>
            <person name="Rey M."/>
            <person name="Reynolds S."/>
            <person name="Rieger M."/>
            <person name="Rivolta C."/>
            <person name="Rocha E."/>
            <person name="Roche B."/>
            <person name="Rose M."/>
            <person name="Sadaie Y."/>
            <person name="Sato T."/>
            <person name="Scanlan E."/>
            <person name="Schleich S."/>
            <person name="Schroeter R."/>
            <person name="Scoffone F."/>
            <person name="Sekiguchi J."/>
            <person name="Sekowska A."/>
            <person name="Seror S.J."/>
            <person name="Serror P."/>
            <person name="Shin B.-S."/>
            <person name="Soldo B."/>
            <person name="Sorokin A."/>
            <person name="Tacconi E."/>
            <person name="Takagi T."/>
            <person name="Takahashi H."/>
            <person name="Takemaru K."/>
            <person name="Takeuchi M."/>
            <person name="Tamakoshi A."/>
            <person name="Tanaka T."/>
            <person name="Terpstra P."/>
            <person name="Tognoni A."/>
            <person name="Tosato V."/>
            <person name="Uchiyama S."/>
            <person name="Vandenbol M."/>
            <person name="Vannier F."/>
            <person name="Vassarotti A."/>
            <person name="Viari A."/>
            <person name="Wambutt R."/>
            <person name="Wedler E."/>
            <person name="Wedler H."/>
            <person name="Weitzenegger T."/>
            <person name="Winters P."/>
            <person name="Wipat A."/>
            <person name="Yamamoto H."/>
            <person name="Yamane K."/>
            <person name="Yasumoto K."/>
            <person name="Yata K."/>
            <person name="Yoshida K."/>
            <person name="Yoshikawa H.-F."/>
            <person name="Zumstein E."/>
            <person name="Yoshikawa H."/>
            <person name="Danchin A."/>
        </authorList>
    </citation>
    <scope>NUCLEOTIDE SEQUENCE [LARGE SCALE GENOMIC DNA]</scope>
    <source>
        <strain>168</strain>
    </source>
</reference>
<reference key="4">
    <citation type="journal article" date="2004" name="J. Bacteriol.">
        <title>Genes involved in formation of structured multicellular communities by Bacillus subtilis.</title>
        <authorList>
            <person name="Branda S.S."/>
            <person name="Gonzalez-Pastor J.E."/>
            <person name="Dervyn E."/>
            <person name="Ehrlich S.D."/>
            <person name="Losick R."/>
            <person name="Kolter R."/>
        </authorList>
    </citation>
    <scope>ROLE IN FORMATION OF BIOFILMS</scope>
    <scope>DISRUPTION PHENOTYPE</scope>
    <source>
        <strain>168</strain>
        <strain>3610</strain>
    </source>
</reference>
<evidence type="ECO:0000255" key="1"/>
<evidence type="ECO:0000269" key="2">
    <source>
    </source>
</evidence>
<evidence type="ECO:0000305" key="3"/>
<feature type="chain" id="PRO_0000086926" description="Protein EcsB">
    <location>
        <begin position="1"/>
        <end position="408"/>
    </location>
</feature>
<feature type="transmembrane region" description="Helical" evidence="1">
    <location>
        <begin position="30"/>
        <end position="50"/>
    </location>
</feature>
<feature type="transmembrane region" description="Helical" evidence="1">
    <location>
        <begin position="53"/>
        <end position="73"/>
    </location>
</feature>
<feature type="transmembrane region" description="Helical" evidence="1">
    <location>
        <begin position="111"/>
        <end position="131"/>
    </location>
</feature>
<feature type="transmembrane region" description="Helical" evidence="1">
    <location>
        <begin position="134"/>
        <end position="154"/>
    </location>
</feature>
<feature type="transmembrane region" description="Helical" evidence="1">
    <location>
        <begin position="180"/>
        <end position="200"/>
    </location>
</feature>
<feature type="transmembrane region" description="Helical" evidence="1">
    <location>
        <begin position="284"/>
        <end position="304"/>
    </location>
</feature>
<feature type="transmembrane region" description="Helical" evidence="1">
    <location>
        <begin position="308"/>
        <end position="328"/>
    </location>
</feature>
<feature type="transmembrane region" description="Helical" evidence="1">
    <location>
        <begin position="351"/>
        <end position="371"/>
    </location>
</feature>
<feature type="transmembrane region" description="Helical" evidence="1">
    <location>
        <begin position="374"/>
        <end position="394"/>
    </location>
</feature>
<keyword id="KW-1003">Cell membrane</keyword>
<keyword id="KW-0178">Competence</keyword>
<keyword id="KW-0472">Membrane</keyword>
<keyword id="KW-1185">Reference proteome</keyword>
<keyword id="KW-0749">Sporulation</keyword>
<keyword id="KW-0812">Transmembrane</keyword>
<keyword id="KW-1133">Transmembrane helix</keyword>
<keyword id="KW-0813">Transport</keyword>
<gene>
    <name type="primary">ecsB</name>
    <name type="synonym">prsT</name>
    <name type="synonym">yhaC</name>
    <name type="ordered locus">BSU10050</name>
</gene>
<dbReference type="EMBL" id="X87807">
    <property type="protein sequence ID" value="CAA61075.1"/>
    <property type="molecule type" value="Genomic_DNA"/>
</dbReference>
<dbReference type="EMBL" id="Y14077">
    <property type="protein sequence ID" value="CAA74408.1"/>
    <property type="molecule type" value="Genomic_DNA"/>
</dbReference>
<dbReference type="EMBL" id="AL009126">
    <property type="protein sequence ID" value="CAB12845.1"/>
    <property type="molecule type" value="Genomic_DNA"/>
</dbReference>
<dbReference type="PIR" id="G69619">
    <property type="entry name" value="G69619"/>
</dbReference>
<dbReference type="RefSeq" id="NP_388886.1">
    <property type="nucleotide sequence ID" value="NC_000964.3"/>
</dbReference>
<dbReference type="RefSeq" id="WP_003245169.1">
    <property type="nucleotide sequence ID" value="NZ_OZ025638.1"/>
</dbReference>
<dbReference type="FunCoup" id="P55340">
    <property type="interactions" value="20"/>
</dbReference>
<dbReference type="STRING" id="224308.BSU10050"/>
<dbReference type="TCDB" id="3.A.1.143.1">
    <property type="family name" value="the atp-binding cassette (abc) superfamily"/>
</dbReference>
<dbReference type="PaxDb" id="224308-BSU10050"/>
<dbReference type="EnsemblBacteria" id="CAB12845">
    <property type="protein sequence ID" value="CAB12845"/>
    <property type="gene ID" value="BSU_10050"/>
</dbReference>
<dbReference type="GeneID" id="939298"/>
<dbReference type="KEGG" id="bsu:BSU10050"/>
<dbReference type="PATRIC" id="fig|224308.179.peg.1081"/>
<dbReference type="eggNOG" id="COG4473">
    <property type="taxonomic scope" value="Bacteria"/>
</dbReference>
<dbReference type="InParanoid" id="P55340"/>
<dbReference type="OrthoDB" id="2447941at2"/>
<dbReference type="PhylomeDB" id="P55340"/>
<dbReference type="BioCyc" id="BSUB:BSU10050-MONOMER"/>
<dbReference type="Proteomes" id="UP000001570">
    <property type="component" value="Chromosome"/>
</dbReference>
<dbReference type="GO" id="GO:0005886">
    <property type="term" value="C:plasma membrane"/>
    <property type="evidence" value="ECO:0007669"/>
    <property type="project" value="UniProtKB-SubCell"/>
</dbReference>
<dbReference type="GO" id="GO:0030420">
    <property type="term" value="P:establishment of competence for transformation"/>
    <property type="evidence" value="ECO:0007669"/>
    <property type="project" value="UniProtKB-KW"/>
</dbReference>
<dbReference type="GO" id="GO:0030435">
    <property type="term" value="P:sporulation resulting in formation of a cellular spore"/>
    <property type="evidence" value="ECO:0007669"/>
    <property type="project" value="UniProtKB-KW"/>
</dbReference>
<dbReference type="InterPro" id="IPR010288">
    <property type="entry name" value="EcsB_ABC"/>
</dbReference>
<dbReference type="Pfam" id="PF05975">
    <property type="entry name" value="EcsB"/>
    <property type="match status" value="1"/>
</dbReference>
<dbReference type="PIRSF" id="PIRSF037259">
    <property type="entry name" value="EcsB_ABC"/>
    <property type="match status" value="1"/>
</dbReference>
<protein>
    <recommendedName>
        <fullName>Protein EcsB</fullName>
    </recommendedName>
</protein>